<dbReference type="GO" id="GO:0042742">
    <property type="term" value="P:defense response to bacterium"/>
    <property type="evidence" value="ECO:0007669"/>
    <property type="project" value="UniProtKB-KW"/>
</dbReference>
<dbReference type="GO" id="GO:0050832">
    <property type="term" value="P:defense response to fungus"/>
    <property type="evidence" value="ECO:0000314"/>
    <property type="project" value="UniProtKB"/>
</dbReference>
<dbReference type="GO" id="GO:0031640">
    <property type="term" value="P:killing of cells of another organism"/>
    <property type="evidence" value="ECO:0007669"/>
    <property type="project" value="UniProtKB-KW"/>
</dbReference>
<dbReference type="GO" id="GO:0006805">
    <property type="term" value="P:xenobiotic metabolic process"/>
    <property type="evidence" value="ECO:0000314"/>
    <property type="project" value="UniProtKB"/>
</dbReference>
<comment type="function">
    <text evidence="1">Possesses potent antifungal activity against F.graminearum but not P.infestans.</text>
</comment>
<comment type="miscellaneous">
    <text evidence="1">Under low salt conditions, possesses potent antifungal activity but activity is drastically reduced under high salt conditions.</text>
</comment>
<comment type="similarity">
    <text evidence="3">Belongs to the plant LTP family.</text>
</comment>
<proteinExistence type="evidence at protein level"/>
<sequence>ITCGQVTSQVAGCLSYLQRGGAPAPXXXXGIRNLXXMA</sequence>
<evidence type="ECO:0000269" key="1">
    <source>
    </source>
</evidence>
<evidence type="ECO:0000303" key="2">
    <source>
    </source>
</evidence>
<evidence type="ECO:0000305" key="3"/>
<reference evidence="3" key="1">
    <citation type="journal article" date="2001" name="Biochem. Biophys. Res. Commun.">
        <title>Purification and characterization of three antifungal proteins from cheeseweed (Malva parviflora).</title>
        <authorList>
            <person name="Wang X."/>
            <person name="Bunkers G.J."/>
            <person name="Walters M.R."/>
            <person name="Thoma R.S."/>
        </authorList>
    </citation>
    <scope>PROTEIN SEQUENCE</scope>
    <scope>FUNCTION</scope>
    <source>
        <tissue>Seed</tissue>
    </source>
</reference>
<feature type="chain" id="PRO_0000153890" description="Antifungal protein 5">
    <location>
        <begin position="1"/>
        <end position="38" status="greater than"/>
    </location>
</feature>
<feature type="non-terminal residue" evidence="2">
    <location>
        <position position="38"/>
    </location>
</feature>
<keyword id="KW-0044">Antibiotic</keyword>
<keyword id="KW-0929">Antimicrobial</keyword>
<keyword id="KW-0903">Direct protein sequencing</keyword>
<keyword id="KW-0295">Fungicide</keyword>
<accession>P83139</accession>
<protein>
    <recommendedName>
        <fullName>Antifungal protein 5</fullName>
    </recommendedName>
    <alternativeName>
        <fullName>CW-5</fullName>
    </alternativeName>
</protein>
<name>AFP5_MALPA</name>
<organism evidence="3">
    <name type="scientific">Malva parviflora</name>
    <name type="common">Little mallow</name>
    <name type="synonym">Cheeseweed mallow</name>
    <dbReference type="NCBI Taxonomy" id="145753"/>
    <lineage>
        <taxon>Eukaryota</taxon>
        <taxon>Viridiplantae</taxon>
        <taxon>Streptophyta</taxon>
        <taxon>Embryophyta</taxon>
        <taxon>Tracheophyta</taxon>
        <taxon>Spermatophyta</taxon>
        <taxon>Magnoliopsida</taxon>
        <taxon>eudicotyledons</taxon>
        <taxon>Gunneridae</taxon>
        <taxon>Pentapetalae</taxon>
        <taxon>rosids</taxon>
        <taxon>malvids</taxon>
        <taxon>Malvales</taxon>
        <taxon>Malvaceae</taxon>
        <taxon>Malvoideae</taxon>
        <taxon>Malva</taxon>
    </lineage>
</organism>